<sequence length="282" mass="32547">MPHAPAKRQKREEYKNALHEDESNAALPKKKFYRQRAHANPFSDHSLTYPKSPADMDWASLYPAYAVVKREQKSAGEEESTPLDEEEQRRLKAITKNVEIADIGCGFGGLLFALAPKFPDTLMLEYVQEKVRALRLQNASIQLYQNASCLRANTMKFLPNFFSKAQLSKIFLCFPDPHFKQRKHKARIVSYTLNSEYAYVLRPGGVVYTITDVKDLHEWMVGHFEKHPSFERCEKEFEEEGEAMDEGVGIMRTETEEGKKVSRNGGMKYVACFRRVEDPEWP</sequence>
<gene>
    <name evidence="1" type="primary">TRM8</name>
    <name type="ORF">SNOG_15087</name>
</gene>
<accession>Q0TZT0</accession>
<reference key="1">
    <citation type="journal article" date="2007" name="Plant Cell">
        <title>Dothideomycete-plant interactions illuminated by genome sequencing and EST analysis of the wheat pathogen Stagonospora nodorum.</title>
        <authorList>
            <person name="Hane J.K."/>
            <person name="Lowe R.G.T."/>
            <person name="Solomon P.S."/>
            <person name="Tan K.-C."/>
            <person name="Schoch C.L."/>
            <person name="Spatafora J.W."/>
            <person name="Crous P.W."/>
            <person name="Kodira C.D."/>
            <person name="Birren B.W."/>
            <person name="Galagan J.E."/>
            <person name="Torriani S.F.F."/>
            <person name="McDonald B.A."/>
            <person name="Oliver R.P."/>
        </authorList>
    </citation>
    <scope>NUCLEOTIDE SEQUENCE [LARGE SCALE GENOMIC DNA]</scope>
    <source>
        <strain>SN15 / ATCC MYA-4574 / FGSC 10173</strain>
    </source>
</reference>
<organism>
    <name type="scientific">Phaeosphaeria nodorum (strain SN15 / ATCC MYA-4574 / FGSC 10173)</name>
    <name type="common">Glume blotch fungus</name>
    <name type="synonym">Parastagonospora nodorum</name>
    <dbReference type="NCBI Taxonomy" id="321614"/>
    <lineage>
        <taxon>Eukaryota</taxon>
        <taxon>Fungi</taxon>
        <taxon>Dikarya</taxon>
        <taxon>Ascomycota</taxon>
        <taxon>Pezizomycotina</taxon>
        <taxon>Dothideomycetes</taxon>
        <taxon>Pleosporomycetidae</taxon>
        <taxon>Pleosporales</taxon>
        <taxon>Pleosporineae</taxon>
        <taxon>Phaeosphaeriaceae</taxon>
        <taxon>Parastagonospora</taxon>
    </lineage>
</organism>
<keyword id="KW-0489">Methyltransferase</keyword>
<keyword id="KW-0539">Nucleus</keyword>
<keyword id="KW-0694">RNA-binding</keyword>
<keyword id="KW-0949">S-adenosyl-L-methionine</keyword>
<keyword id="KW-0808">Transferase</keyword>
<keyword id="KW-0819">tRNA processing</keyword>
<keyword id="KW-0820">tRNA-binding</keyword>
<dbReference type="EC" id="2.1.1.33" evidence="1"/>
<dbReference type="EMBL" id="CH445359">
    <property type="protein sequence ID" value="EAT77630.2"/>
    <property type="molecule type" value="Genomic_DNA"/>
</dbReference>
<dbReference type="RefSeq" id="XP_001805250.1">
    <property type="nucleotide sequence ID" value="XM_001805198.1"/>
</dbReference>
<dbReference type="SMR" id="Q0TZT0"/>
<dbReference type="FunCoup" id="Q0TZT0">
    <property type="interactions" value="496"/>
</dbReference>
<dbReference type="STRING" id="321614.Q0TZT0"/>
<dbReference type="EnsemblFungi" id="SNOT_15087">
    <property type="protein sequence ID" value="SNOT_15087"/>
    <property type="gene ID" value="SNOG_15087"/>
</dbReference>
<dbReference type="GeneID" id="5982178"/>
<dbReference type="KEGG" id="pno:SNOG_15087"/>
<dbReference type="VEuPathDB" id="FungiDB:JI435_150870"/>
<dbReference type="eggNOG" id="KOG3115">
    <property type="taxonomic scope" value="Eukaryota"/>
</dbReference>
<dbReference type="HOGENOM" id="CLU_050910_3_1_1"/>
<dbReference type="InParanoid" id="Q0TZT0"/>
<dbReference type="UniPathway" id="UPA00989"/>
<dbReference type="Proteomes" id="UP000001055">
    <property type="component" value="Unassembled WGS sequence"/>
</dbReference>
<dbReference type="GO" id="GO:0005634">
    <property type="term" value="C:nucleus"/>
    <property type="evidence" value="ECO:0007669"/>
    <property type="project" value="UniProtKB-SubCell"/>
</dbReference>
<dbReference type="GO" id="GO:0043527">
    <property type="term" value="C:tRNA methyltransferase complex"/>
    <property type="evidence" value="ECO:0000318"/>
    <property type="project" value="GO_Central"/>
</dbReference>
<dbReference type="GO" id="GO:0008176">
    <property type="term" value="F:tRNA (guanine(46)-N7)-methyltransferase activity"/>
    <property type="evidence" value="ECO:0000318"/>
    <property type="project" value="GO_Central"/>
</dbReference>
<dbReference type="GO" id="GO:0000049">
    <property type="term" value="F:tRNA binding"/>
    <property type="evidence" value="ECO:0007669"/>
    <property type="project" value="UniProtKB-UniRule"/>
</dbReference>
<dbReference type="GO" id="GO:0036265">
    <property type="term" value="P:RNA (guanine-N7)-methylation"/>
    <property type="evidence" value="ECO:0000318"/>
    <property type="project" value="GO_Central"/>
</dbReference>
<dbReference type="GO" id="GO:0030488">
    <property type="term" value="P:tRNA methylation"/>
    <property type="evidence" value="ECO:0000318"/>
    <property type="project" value="GO_Central"/>
</dbReference>
<dbReference type="CDD" id="cd02440">
    <property type="entry name" value="AdoMet_MTases"/>
    <property type="match status" value="1"/>
</dbReference>
<dbReference type="FunFam" id="3.40.50.150:FF:000060">
    <property type="entry name" value="tRNA (guanine-N(7)-)-methyltransferase"/>
    <property type="match status" value="1"/>
</dbReference>
<dbReference type="Gene3D" id="3.40.50.150">
    <property type="entry name" value="Vaccinia Virus protein VP39"/>
    <property type="match status" value="1"/>
</dbReference>
<dbReference type="HAMAP" id="MF_03055">
    <property type="entry name" value="tRNA_methyltr_TrmB_euk"/>
    <property type="match status" value="1"/>
</dbReference>
<dbReference type="InterPro" id="IPR029063">
    <property type="entry name" value="SAM-dependent_MTases_sf"/>
</dbReference>
<dbReference type="InterPro" id="IPR025763">
    <property type="entry name" value="Trm8_euk"/>
</dbReference>
<dbReference type="InterPro" id="IPR003358">
    <property type="entry name" value="tRNA_(Gua-N-7)_MeTrfase_Trmb"/>
</dbReference>
<dbReference type="NCBIfam" id="TIGR00091">
    <property type="entry name" value="tRNA (guanosine(46)-N7)-methyltransferase TrmB"/>
    <property type="match status" value="1"/>
</dbReference>
<dbReference type="PANTHER" id="PTHR23417">
    <property type="entry name" value="3-DEOXY-D-MANNO-OCTULOSONIC-ACID TRANSFERASE/TRNA GUANINE-N 7 - -METHYLTRANSFERASE"/>
    <property type="match status" value="1"/>
</dbReference>
<dbReference type="PANTHER" id="PTHR23417:SF16">
    <property type="entry name" value="TRNA (GUANINE-N(7)-)-METHYLTRANSFERASE"/>
    <property type="match status" value="1"/>
</dbReference>
<dbReference type="Pfam" id="PF02390">
    <property type="entry name" value="Methyltransf_4"/>
    <property type="match status" value="1"/>
</dbReference>
<dbReference type="SUPFAM" id="SSF53335">
    <property type="entry name" value="S-adenosyl-L-methionine-dependent methyltransferases"/>
    <property type="match status" value="1"/>
</dbReference>
<dbReference type="PROSITE" id="PS51625">
    <property type="entry name" value="SAM_MT_TRMB"/>
    <property type="match status" value="1"/>
</dbReference>
<protein>
    <recommendedName>
        <fullName evidence="1">tRNA (guanine-N(7)-)-methyltransferase</fullName>
        <ecNumber evidence="1">2.1.1.33</ecNumber>
    </recommendedName>
    <alternativeName>
        <fullName evidence="1">Transfer RNA methyltransferase 8</fullName>
    </alternativeName>
    <alternativeName>
        <fullName evidence="1">tRNA (guanine(46)-N(7))-methyltransferase</fullName>
    </alternativeName>
    <alternativeName>
        <fullName evidence="1">tRNA(m7G46)-methyltransferase</fullName>
    </alternativeName>
</protein>
<evidence type="ECO:0000255" key="1">
    <source>
        <dbReference type="HAMAP-Rule" id="MF_03055"/>
    </source>
</evidence>
<evidence type="ECO:0000256" key="2">
    <source>
        <dbReference type="SAM" id="MobiDB-lite"/>
    </source>
</evidence>
<name>TRMB_PHANO</name>
<proteinExistence type="inferred from homology"/>
<feature type="chain" id="PRO_0000370601" description="tRNA (guanine-N(7)-)-methyltransferase">
    <location>
        <begin position="1"/>
        <end position="282"/>
    </location>
</feature>
<feature type="region of interest" description="Disordered" evidence="2">
    <location>
        <begin position="1"/>
        <end position="29"/>
    </location>
</feature>
<feature type="compositionally biased region" description="Basic and acidic residues" evidence="2">
    <location>
        <begin position="10"/>
        <end position="22"/>
    </location>
</feature>
<feature type="active site" evidence="1">
    <location>
        <position position="176"/>
    </location>
</feature>
<feature type="binding site" evidence="1">
    <location>
        <position position="104"/>
    </location>
    <ligand>
        <name>S-adenosyl-L-methionine</name>
        <dbReference type="ChEBI" id="CHEBI:59789"/>
    </ligand>
</feature>
<feature type="binding site" evidence="1">
    <location>
        <begin position="153"/>
        <end position="154"/>
    </location>
    <ligand>
        <name>S-adenosyl-L-methionine</name>
        <dbReference type="ChEBI" id="CHEBI:59789"/>
    </ligand>
</feature>
<feature type="binding site" evidence="1">
    <location>
        <position position="173"/>
    </location>
    <ligand>
        <name>S-adenosyl-L-methionine</name>
        <dbReference type="ChEBI" id="CHEBI:59789"/>
    </ligand>
</feature>
<feature type="binding site" evidence="1">
    <location>
        <begin position="255"/>
        <end position="257"/>
    </location>
    <ligand>
        <name>S-adenosyl-L-methionine</name>
        <dbReference type="ChEBI" id="CHEBI:59789"/>
    </ligand>
</feature>
<comment type="function">
    <text evidence="1">Catalyzes the formation of N(7)-methylguanine at position 46 (m7G46) in tRNA.</text>
</comment>
<comment type="catalytic activity">
    <reaction evidence="1">
        <text>guanosine(46) in tRNA + S-adenosyl-L-methionine = N(7)-methylguanosine(46) in tRNA + S-adenosyl-L-homocysteine</text>
        <dbReference type="Rhea" id="RHEA:42708"/>
        <dbReference type="Rhea" id="RHEA-COMP:10188"/>
        <dbReference type="Rhea" id="RHEA-COMP:10189"/>
        <dbReference type="ChEBI" id="CHEBI:57856"/>
        <dbReference type="ChEBI" id="CHEBI:59789"/>
        <dbReference type="ChEBI" id="CHEBI:74269"/>
        <dbReference type="ChEBI" id="CHEBI:74480"/>
        <dbReference type="EC" id="2.1.1.33"/>
    </reaction>
</comment>
<comment type="pathway">
    <text evidence="1">tRNA modification; N(7)-methylguanine-tRNA biosynthesis.</text>
</comment>
<comment type="subunit">
    <text evidence="1">Forms a complex with TRM82.</text>
</comment>
<comment type="subcellular location">
    <subcellularLocation>
        <location evidence="1">Nucleus</location>
    </subcellularLocation>
</comment>
<comment type="similarity">
    <text evidence="1">Belongs to the class I-like SAM-binding methyltransferase superfamily. TrmB family.</text>
</comment>